<evidence type="ECO:0000255" key="1">
    <source>
        <dbReference type="HAMAP-Rule" id="MF_01396"/>
    </source>
</evidence>
<gene>
    <name evidence="1" type="primary">atpE</name>
    <name type="ordered locus">DehaBAV1_0533</name>
</gene>
<name>ATPL_DEHMB</name>
<sequence>MEADVIKLLAAGLAMGLGAIGPGIGVGILGFGALQAIGRNPEAKGSIFTNMILLVAFAESIAIFALVISIVLIFVA</sequence>
<proteinExistence type="inferred from homology"/>
<accession>A5FRR4</accession>
<organism>
    <name type="scientific">Dehalococcoides mccartyi (strain ATCC BAA-2100 / JCM 16839 / KCTC 5957 / BAV1)</name>
    <dbReference type="NCBI Taxonomy" id="216389"/>
    <lineage>
        <taxon>Bacteria</taxon>
        <taxon>Bacillati</taxon>
        <taxon>Chloroflexota</taxon>
        <taxon>Dehalococcoidia</taxon>
        <taxon>Dehalococcoidales</taxon>
        <taxon>Dehalococcoidaceae</taxon>
        <taxon>Dehalococcoides</taxon>
    </lineage>
</organism>
<feature type="chain" id="PRO_0000365878" description="ATP synthase subunit c">
    <location>
        <begin position="1"/>
        <end position="76"/>
    </location>
</feature>
<feature type="transmembrane region" description="Helical" evidence="1">
    <location>
        <begin position="8"/>
        <end position="28"/>
    </location>
</feature>
<feature type="transmembrane region" description="Helical" evidence="1">
    <location>
        <begin position="55"/>
        <end position="75"/>
    </location>
</feature>
<feature type="site" description="Reversibly protonated during proton transport" evidence="1">
    <location>
        <position position="59"/>
    </location>
</feature>
<reference key="1">
    <citation type="submission" date="2007-05" db="EMBL/GenBank/DDBJ databases">
        <title>Complete sequence of Dehalococcoides sp. BAV1.</title>
        <authorList>
            <consortium name="US DOE Joint Genome Institute"/>
            <person name="Copeland A."/>
            <person name="Lucas S."/>
            <person name="Lapidus A."/>
            <person name="Barry K."/>
            <person name="Detter J.C."/>
            <person name="Glavina del Rio T."/>
            <person name="Hammon N."/>
            <person name="Israni S."/>
            <person name="Pitluck S."/>
            <person name="Lowry S."/>
            <person name="Clum A."/>
            <person name="Schmutz J."/>
            <person name="Larimer F."/>
            <person name="Land M."/>
            <person name="Hauser L."/>
            <person name="Kyrpides N."/>
            <person name="Kim E."/>
            <person name="Ritalahti K.M."/>
            <person name="Loeffler F."/>
            <person name="Richardson P."/>
        </authorList>
    </citation>
    <scope>NUCLEOTIDE SEQUENCE [LARGE SCALE GENOMIC DNA]</scope>
    <source>
        <strain>ATCC BAA-2100 / JCM 16839 / KCTC 5957 / BAV1</strain>
    </source>
</reference>
<keyword id="KW-0066">ATP synthesis</keyword>
<keyword id="KW-1003">Cell membrane</keyword>
<keyword id="KW-0138">CF(0)</keyword>
<keyword id="KW-0375">Hydrogen ion transport</keyword>
<keyword id="KW-0406">Ion transport</keyword>
<keyword id="KW-0446">Lipid-binding</keyword>
<keyword id="KW-0472">Membrane</keyword>
<keyword id="KW-0812">Transmembrane</keyword>
<keyword id="KW-1133">Transmembrane helix</keyword>
<keyword id="KW-0813">Transport</keyword>
<comment type="function">
    <text evidence="1">F(1)F(0) ATP synthase produces ATP from ADP in the presence of a proton or sodium gradient. F-type ATPases consist of two structural domains, F(1) containing the extramembraneous catalytic core and F(0) containing the membrane proton channel, linked together by a central stalk and a peripheral stalk. During catalysis, ATP synthesis in the catalytic domain of F(1) is coupled via a rotary mechanism of the central stalk subunits to proton translocation.</text>
</comment>
<comment type="function">
    <text evidence="1">Key component of the F(0) channel; it plays a direct role in translocation across the membrane. A homomeric c-ring of between 10-14 subunits forms the central stalk rotor element with the F(1) delta and epsilon subunits.</text>
</comment>
<comment type="subunit">
    <text evidence="1">F-type ATPases have 2 components, F(1) - the catalytic core - and F(0) - the membrane proton channel. F(1) has five subunits: alpha(3), beta(3), gamma(1), delta(1), epsilon(1). F(0) has three main subunits: a(1), b(2) and c(10-14). The alpha and beta chains form an alternating ring which encloses part of the gamma chain. F(1) is attached to F(0) by a central stalk formed by the gamma and epsilon chains, while a peripheral stalk is formed by the delta and b chains.</text>
</comment>
<comment type="subcellular location">
    <subcellularLocation>
        <location evidence="1">Cell membrane</location>
        <topology evidence="1">Multi-pass membrane protein</topology>
    </subcellularLocation>
</comment>
<comment type="similarity">
    <text evidence="1">Belongs to the ATPase C chain family.</text>
</comment>
<protein>
    <recommendedName>
        <fullName evidence="1">ATP synthase subunit c</fullName>
    </recommendedName>
    <alternativeName>
        <fullName evidence="1">ATP synthase F(0) sector subunit c</fullName>
    </alternativeName>
    <alternativeName>
        <fullName evidence="1">F-type ATPase subunit c</fullName>
        <shortName evidence="1">F-ATPase subunit c</shortName>
    </alternativeName>
    <alternativeName>
        <fullName evidence="1">Lipid-binding protein</fullName>
    </alternativeName>
</protein>
<dbReference type="EMBL" id="CP000688">
    <property type="protein sequence ID" value="ABQ17118.1"/>
    <property type="molecule type" value="Genomic_DNA"/>
</dbReference>
<dbReference type="SMR" id="A5FRR4"/>
<dbReference type="KEGG" id="deb:DehaBAV1_0533"/>
<dbReference type="PATRIC" id="fig|216389.18.peg.578"/>
<dbReference type="HOGENOM" id="CLU_148047_5_0_0"/>
<dbReference type="GO" id="GO:0005886">
    <property type="term" value="C:plasma membrane"/>
    <property type="evidence" value="ECO:0007669"/>
    <property type="project" value="UniProtKB-SubCell"/>
</dbReference>
<dbReference type="GO" id="GO:0045259">
    <property type="term" value="C:proton-transporting ATP synthase complex"/>
    <property type="evidence" value="ECO:0007669"/>
    <property type="project" value="UniProtKB-KW"/>
</dbReference>
<dbReference type="GO" id="GO:0033177">
    <property type="term" value="C:proton-transporting two-sector ATPase complex, proton-transporting domain"/>
    <property type="evidence" value="ECO:0007669"/>
    <property type="project" value="InterPro"/>
</dbReference>
<dbReference type="GO" id="GO:0008289">
    <property type="term" value="F:lipid binding"/>
    <property type="evidence" value="ECO:0007669"/>
    <property type="project" value="UniProtKB-KW"/>
</dbReference>
<dbReference type="GO" id="GO:0046933">
    <property type="term" value="F:proton-transporting ATP synthase activity, rotational mechanism"/>
    <property type="evidence" value="ECO:0007669"/>
    <property type="project" value="UniProtKB-UniRule"/>
</dbReference>
<dbReference type="CDD" id="cd18121">
    <property type="entry name" value="ATP-synt_Fo_c"/>
    <property type="match status" value="1"/>
</dbReference>
<dbReference type="FunFam" id="1.20.20.10:FF:000002">
    <property type="entry name" value="ATP synthase subunit c"/>
    <property type="match status" value="1"/>
</dbReference>
<dbReference type="Gene3D" id="1.20.20.10">
    <property type="entry name" value="F1F0 ATP synthase subunit C"/>
    <property type="match status" value="1"/>
</dbReference>
<dbReference type="HAMAP" id="MF_01396">
    <property type="entry name" value="ATP_synth_c_bact"/>
    <property type="match status" value="1"/>
</dbReference>
<dbReference type="InterPro" id="IPR005953">
    <property type="entry name" value="ATP_synth_csu_bac/chlpt"/>
</dbReference>
<dbReference type="InterPro" id="IPR000454">
    <property type="entry name" value="ATP_synth_F0_csu"/>
</dbReference>
<dbReference type="InterPro" id="IPR020537">
    <property type="entry name" value="ATP_synth_F0_csu_DDCD_BS"/>
</dbReference>
<dbReference type="InterPro" id="IPR038662">
    <property type="entry name" value="ATP_synth_F0_csu_sf"/>
</dbReference>
<dbReference type="InterPro" id="IPR002379">
    <property type="entry name" value="ATPase_proteolipid_c-like_dom"/>
</dbReference>
<dbReference type="InterPro" id="IPR035921">
    <property type="entry name" value="F/V-ATP_Csub_sf"/>
</dbReference>
<dbReference type="NCBIfam" id="TIGR01260">
    <property type="entry name" value="ATP_synt_c"/>
    <property type="match status" value="1"/>
</dbReference>
<dbReference type="Pfam" id="PF00137">
    <property type="entry name" value="ATP-synt_C"/>
    <property type="match status" value="1"/>
</dbReference>
<dbReference type="PRINTS" id="PR00124">
    <property type="entry name" value="ATPASEC"/>
</dbReference>
<dbReference type="SUPFAM" id="SSF81333">
    <property type="entry name" value="F1F0 ATP synthase subunit C"/>
    <property type="match status" value="1"/>
</dbReference>
<dbReference type="PROSITE" id="PS00605">
    <property type="entry name" value="ATPASE_C"/>
    <property type="match status" value="1"/>
</dbReference>